<protein>
    <recommendedName>
        <fullName>G-protein coupled receptor 157</fullName>
    </recommendedName>
</protein>
<reference key="1">
    <citation type="journal article" date="2004" name="Genome Res.">
        <title>The status, quality, and expansion of the NIH full-length cDNA project: the Mammalian Gene Collection (MGC).</title>
        <authorList>
            <consortium name="The MGC Project Team"/>
        </authorList>
    </citation>
    <scope>NUCLEOTIDE SEQUENCE [LARGE SCALE MRNA]</scope>
    <source>
        <tissue>Liver</tissue>
    </source>
</reference>
<dbReference type="EMBL" id="BC090013">
    <property type="protein sequence ID" value="AAH90013.1"/>
    <property type="molecule type" value="mRNA"/>
</dbReference>
<dbReference type="RefSeq" id="NP_001012107.1">
    <property type="nucleotide sequence ID" value="NM_001012107.1"/>
</dbReference>
<dbReference type="SMR" id="Q5FVG1"/>
<dbReference type="FunCoup" id="Q5FVG1">
    <property type="interactions" value="90"/>
</dbReference>
<dbReference type="STRING" id="10116.ENSRNOP00000052398"/>
<dbReference type="GlyGen" id="Q5FVG1">
    <property type="glycosylation" value="1 site"/>
</dbReference>
<dbReference type="PhosphoSitePlus" id="Q5FVG1"/>
<dbReference type="PaxDb" id="10116-ENSRNOP00000052398"/>
<dbReference type="Ensembl" id="ENSRNOT00000055536.2">
    <property type="protein sequence ID" value="ENSRNOP00000052398.1"/>
    <property type="gene ID" value="ENSRNOG00000017528.6"/>
</dbReference>
<dbReference type="GeneID" id="313725"/>
<dbReference type="KEGG" id="rno:313725"/>
<dbReference type="UCSC" id="RGD:1311096">
    <property type="organism name" value="rat"/>
</dbReference>
<dbReference type="AGR" id="RGD:1311096"/>
<dbReference type="CTD" id="80045"/>
<dbReference type="RGD" id="1311096">
    <property type="gene designation" value="Gpr157"/>
</dbReference>
<dbReference type="eggNOG" id="ENOG502QU1X">
    <property type="taxonomic scope" value="Eukaryota"/>
</dbReference>
<dbReference type="GeneTree" id="ENSGT00390000012992"/>
<dbReference type="HOGENOM" id="CLU_052670_0_0_1"/>
<dbReference type="InParanoid" id="Q5FVG1"/>
<dbReference type="OMA" id="CIMFVLF"/>
<dbReference type="OrthoDB" id="100006at2759"/>
<dbReference type="PhylomeDB" id="Q5FVG1"/>
<dbReference type="TreeFam" id="TF330856"/>
<dbReference type="PRO" id="PR:Q5FVG1"/>
<dbReference type="Proteomes" id="UP000002494">
    <property type="component" value="Chromosome 5"/>
</dbReference>
<dbReference type="Bgee" id="ENSRNOG00000017528">
    <property type="expression patterns" value="Expressed in quadriceps femoris and 18 other cell types or tissues"/>
</dbReference>
<dbReference type="GO" id="GO:0060170">
    <property type="term" value="C:ciliary membrane"/>
    <property type="evidence" value="ECO:0000250"/>
    <property type="project" value="UniProtKB"/>
</dbReference>
<dbReference type="GO" id="GO:0005886">
    <property type="term" value="C:plasma membrane"/>
    <property type="evidence" value="ECO:0000318"/>
    <property type="project" value="GO_Central"/>
</dbReference>
<dbReference type="GO" id="GO:0004930">
    <property type="term" value="F:G protein-coupled receptor activity"/>
    <property type="evidence" value="ECO:0000250"/>
    <property type="project" value="UniProtKB"/>
</dbReference>
<dbReference type="GO" id="GO:0007189">
    <property type="term" value="P:adenylate cyclase-activating G protein-coupled receptor signaling pathway"/>
    <property type="evidence" value="ECO:0000318"/>
    <property type="project" value="GO_Central"/>
</dbReference>
<dbReference type="GO" id="GO:0007166">
    <property type="term" value="P:cell surface receptor signaling pathway"/>
    <property type="evidence" value="ECO:0007669"/>
    <property type="project" value="InterPro"/>
</dbReference>
<dbReference type="GO" id="GO:0048512">
    <property type="term" value="P:circadian behavior"/>
    <property type="evidence" value="ECO:0000266"/>
    <property type="project" value="RGD"/>
</dbReference>
<dbReference type="GO" id="GO:0007200">
    <property type="term" value="P:phospholipase C-activating G protein-coupled receptor signaling pathway"/>
    <property type="evidence" value="ECO:0000250"/>
    <property type="project" value="UniProtKB"/>
</dbReference>
<dbReference type="GO" id="GO:0060019">
    <property type="term" value="P:radial glial cell differentiation"/>
    <property type="evidence" value="ECO:0000250"/>
    <property type="project" value="UniProtKB"/>
</dbReference>
<dbReference type="FunFam" id="1.20.1070.10:FF:000301">
    <property type="entry name" value="G-protein coupled receptor 157"/>
    <property type="match status" value="1"/>
</dbReference>
<dbReference type="Gene3D" id="1.20.1070.10">
    <property type="entry name" value="Rhodopsin 7-helix transmembrane proteins"/>
    <property type="match status" value="1"/>
</dbReference>
<dbReference type="InterPro" id="IPR022343">
    <property type="entry name" value="GCR1-cAMP_receptor"/>
</dbReference>
<dbReference type="InterPro" id="IPR017981">
    <property type="entry name" value="GPCR_2-like_7TM"/>
</dbReference>
<dbReference type="InterPro" id="IPR000832">
    <property type="entry name" value="GPCR_2_secretin-like"/>
</dbReference>
<dbReference type="InterPro" id="IPR017452">
    <property type="entry name" value="GPCR_Rhodpsn_7TM"/>
</dbReference>
<dbReference type="PANTHER" id="PTHR23112">
    <property type="entry name" value="G PROTEIN-COUPLED RECEPTOR 157-RELATED"/>
    <property type="match status" value="1"/>
</dbReference>
<dbReference type="PANTHER" id="PTHR23112:SF47">
    <property type="entry name" value="G-PROTEIN COUPLED RECEPTOR 157"/>
    <property type="match status" value="1"/>
</dbReference>
<dbReference type="Pfam" id="PF00002">
    <property type="entry name" value="7tm_2"/>
    <property type="match status" value="1"/>
</dbReference>
<dbReference type="PRINTS" id="PR02001">
    <property type="entry name" value="GCR1CAMPR"/>
</dbReference>
<dbReference type="SUPFAM" id="SSF81321">
    <property type="entry name" value="Family A G protein-coupled receptor-like"/>
    <property type="match status" value="1"/>
</dbReference>
<dbReference type="PROSITE" id="PS50261">
    <property type="entry name" value="G_PROTEIN_RECEP_F2_4"/>
    <property type="match status" value="1"/>
</dbReference>
<proteinExistence type="evidence at transcript level"/>
<feature type="chain" id="PRO_0000070341" description="G-protein coupled receptor 157">
    <location>
        <begin position="1"/>
        <end position="330"/>
    </location>
</feature>
<feature type="topological domain" description="Extracellular" evidence="2">
    <location>
        <begin position="1"/>
        <end position="15"/>
    </location>
</feature>
<feature type="transmembrane region" description="Helical; Name=1" evidence="2">
    <location>
        <begin position="16"/>
        <end position="36"/>
    </location>
</feature>
<feature type="topological domain" description="Cytoplasmic" evidence="2">
    <location>
        <begin position="37"/>
        <end position="48"/>
    </location>
</feature>
<feature type="transmembrane region" description="Helical; Name=2" evidence="2">
    <location>
        <begin position="49"/>
        <end position="69"/>
    </location>
</feature>
<feature type="topological domain" description="Extracellular" evidence="2">
    <location>
        <begin position="70"/>
        <end position="87"/>
    </location>
</feature>
<feature type="transmembrane region" description="Helical; Name=3" evidence="2">
    <location>
        <begin position="88"/>
        <end position="108"/>
    </location>
</feature>
<feature type="topological domain" description="Cytoplasmic" evidence="2">
    <location>
        <begin position="109"/>
        <end position="119"/>
    </location>
</feature>
<feature type="transmembrane region" description="Helical; Name=4" evidence="2">
    <location>
        <begin position="120"/>
        <end position="140"/>
    </location>
</feature>
<feature type="topological domain" description="Extracellular" evidence="2">
    <location>
        <begin position="141"/>
        <end position="166"/>
    </location>
</feature>
<feature type="transmembrane region" description="Helical; Name=5" evidence="2">
    <location>
        <begin position="167"/>
        <end position="187"/>
    </location>
</feature>
<feature type="topological domain" description="Cytoplasmic" evidence="2">
    <location>
        <begin position="188"/>
        <end position="227"/>
    </location>
</feature>
<feature type="transmembrane region" description="Helical; Name=6" evidence="2">
    <location>
        <begin position="228"/>
        <end position="250"/>
    </location>
</feature>
<feature type="topological domain" description="Extracellular" evidence="2">
    <location>
        <begin position="251"/>
        <end position="259"/>
    </location>
</feature>
<feature type="transmembrane region" description="Helical; Name=7" evidence="2">
    <location>
        <begin position="260"/>
        <end position="282"/>
    </location>
</feature>
<feature type="topological domain" description="Cytoplasmic" evidence="2">
    <location>
        <begin position="283"/>
        <end position="330"/>
    </location>
</feature>
<feature type="region of interest" description="Disordered" evidence="3">
    <location>
        <begin position="303"/>
        <end position="330"/>
    </location>
</feature>
<feature type="compositionally biased region" description="Basic and acidic residues" evidence="3">
    <location>
        <begin position="317"/>
        <end position="330"/>
    </location>
</feature>
<name>GP157_RAT</name>
<keyword id="KW-1003">Cell membrane</keyword>
<keyword id="KW-0966">Cell projection</keyword>
<keyword id="KW-0217">Developmental protein</keyword>
<keyword id="KW-0221">Differentiation</keyword>
<keyword id="KW-0297">G-protein coupled receptor</keyword>
<keyword id="KW-0472">Membrane</keyword>
<keyword id="KW-0675">Receptor</keyword>
<keyword id="KW-1185">Reference proteome</keyword>
<keyword id="KW-0807">Transducer</keyword>
<keyword id="KW-0812">Transmembrane</keyword>
<keyword id="KW-1133">Transmembrane helix</keyword>
<sequence>MPTPAPPTELLPWERAVVLLSCVLSALGSGLLVATHALWPDLRSRARRLLLFLSLADLLSAASYFYGVLQDFAGTSWDCVLQGALSTFANTSSFFWTVAIALYLYLNIVRATRGPCTDHLVWAFHLISWGVPLAITVAAVCLKKIGYDASDVSVGWCWINLEAEDRVLWMLLTGKLWEMLAYILLPLLYLLVRKHINRAHQALSEYRPIWEGRQLQRGSPTSMADKKLILIPFIFICLRVWSTVRFVLTLCGSPVVQAPVLVVLHGIGNTFQGGANCIMFVLCTRAVRTRLFSLCCCYPRPPTQNPPGASIPPKMGESQESRRTPEVPST</sequence>
<comment type="function">
    <text evidence="1">Orphan receptor that promotes neuronal differentiation of radial glial progenitors (RGPs). The activity of this receptor is mediated by a G(q)-protein that activates a phosphatidylinositol-calcium second messenger.</text>
</comment>
<comment type="subcellular location">
    <subcellularLocation>
        <location evidence="1">Cell projection</location>
        <location evidence="1">Cilium membrane</location>
        <topology evidence="2">Multi-pass membrane protein</topology>
    </subcellularLocation>
    <text evidence="1">Expressed in the primary cilia of radial glial progenitors (RGPs) exposed to the cerebrospinal fluid.</text>
</comment>
<comment type="similarity">
    <text evidence="4">Belongs to the G-protein coupled receptor 2 family.</text>
</comment>
<evidence type="ECO:0000250" key="1">
    <source>
        <dbReference type="UniProtKB" id="Q8C206"/>
    </source>
</evidence>
<evidence type="ECO:0000255" key="2"/>
<evidence type="ECO:0000256" key="3">
    <source>
        <dbReference type="SAM" id="MobiDB-lite"/>
    </source>
</evidence>
<evidence type="ECO:0000305" key="4"/>
<organism>
    <name type="scientific">Rattus norvegicus</name>
    <name type="common">Rat</name>
    <dbReference type="NCBI Taxonomy" id="10116"/>
    <lineage>
        <taxon>Eukaryota</taxon>
        <taxon>Metazoa</taxon>
        <taxon>Chordata</taxon>
        <taxon>Craniata</taxon>
        <taxon>Vertebrata</taxon>
        <taxon>Euteleostomi</taxon>
        <taxon>Mammalia</taxon>
        <taxon>Eutheria</taxon>
        <taxon>Euarchontoglires</taxon>
        <taxon>Glires</taxon>
        <taxon>Rodentia</taxon>
        <taxon>Myomorpha</taxon>
        <taxon>Muroidea</taxon>
        <taxon>Muridae</taxon>
        <taxon>Murinae</taxon>
        <taxon>Rattus</taxon>
    </lineage>
</organism>
<gene>
    <name type="primary">Gpr157</name>
</gene>
<accession>Q5FVG1</accession>